<keyword id="KW-0067">ATP-binding</keyword>
<keyword id="KW-0997">Cell inner membrane</keyword>
<keyword id="KW-1003">Cell membrane</keyword>
<keyword id="KW-0963">Cytoplasm</keyword>
<keyword id="KW-0472">Membrane</keyword>
<keyword id="KW-0479">Metal-binding</keyword>
<keyword id="KW-0547">Nucleotide-binding</keyword>
<keyword id="KW-0653">Protein transport</keyword>
<keyword id="KW-1278">Translocase</keyword>
<keyword id="KW-0811">Translocation</keyword>
<keyword id="KW-0813">Transport</keyword>
<keyword id="KW-0862">Zinc</keyword>
<sequence length="1020" mass="116247">MLKIFEKIFGSKHEKDIQKIQPVINRINEIQEGLKGLGDDELKEKGKALKSRIRGVLMPIEDKKKELYRQLDNPELSLEEAESIHSSLDALAEEYEEKTASALEEALPETFALVKETCRRLKGLTYQVMGRDVVWDMVPYDVQLIGGIVLHSGKISEMATGEGKTLVSTLPTFLNALTGRGVHLVTVNDYLAQRDKEWMNPVFDFHNISVGVILNTMRPEERRQQYQCDVTYGTNNEFGFDYLRDNMAGTVEEMVQRDFYFAIVDEVDSVLIDEARTPLIISGPVPNSDNSQFQEIKPWIEQIVRAQQQLAASYLTEAEKALKESPQSPEAGLALLRVKRGQPKNTRFIKILSQQGMAKLIQVTENEYLRDNSSRMHEVDDELYFAVDEKAGTIDLTDKGREFLSKLSHQDRDLFLLPDVGTEVAAIDDDESVIAADKITRKDAVYRLFAERSERLHNISQLLKAYSLFLKDDEYVVQNGQVMIVDEFTGRILPGRRYSDGLHQAIEAKENVKIEGETQTMATVTIQNFFRLYEKLAGMTGTAETEASEFFEIYKLDVVAIPTNRPIVRKDMDDLVYKTRREKYNAIALKVEELQKKGQPVLVGTTSVEVSETLSRMLRARRIAHNVLNAKQNEREAEIVEGAGRPGAVTIATNMAGRGTDIKLGEGVREKGGLYILGSERHESRRIDRQLRGRAGRQGDPGESVFFVSLEDELMRLFGSDRVISVMDRLGHEEGDVIEHSMITKSIERAQKKVEEQNFAIRKRLLEYDDVLNQQREVIYTRRRDGLIKERLTTDILDLLRDYCDSVIDRHSKNLDTEGIEEQLLRELSIEFKPDRNNLEENATGVSEELYNSALAFYRRKEEAVPADIMRQIEKYAVLSVIDKQWRDHLREIDTLREGINLRAYGQKDPLLEYKQEAYNLFIQMLSEIELETLSLAFKLFPVNPDEVRAIEERQRQAAVRQEKLVTQHDDAASVYNASPGAENEAPLQRPVTADSKPGRNDPCPCGSGKKYKNCHGQQP</sequence>
<evidence type="ECO:0000255" key="1">
    <source>
        <dbReference type="HAMAP-Rule" id="MF_01382"/>
    </source>
</evidence>
<evidence type="ECO:0000256" key="2">
    <source>
        <dbReference type="SAM" id="MobiDB-lite"/>
    </source>
</evidence>
<proteinExistence type="inferred from homology"/>
<name>SECA_CHLPM</name>
<protein>
    <recommendedName>
        <fullName evidence="1">Protein translocase subunit SecA</fullName>
        <ecNumber evidence="1">7.4.2.8</ecNumber>
    </recommendedName>
</protein>
<reference key="1">
    <citation type="submission" date="2007-03" db="EMBL/GenBank/DDBJ databases">
        <title>Complete sequence of Prosthecochloris vibrioformis DSM 265.</title>
        <authorList>
            <consortium name="US DOE Joint Genome Institute"/>
            <person name="Copeland A."/>
            <person name="Lucas S."/>
            <person name="Lapidus A."/>
            <person name="Barry K."/>
            <person name="Detter J.C."/>
            <person name="Glavina del Rio T."/>
            <person name="Hammon N."/>
            <person name="Israni S."/>
            <person name="Pitluck S."/>
            <person name="Schmutz J."/>
            <person name="Larimer F."/>
            <person name="Land M."/>
            <person name="Hauser L."/>
            <person name="Mikhailova N."/>
            <person name="Li T."/>
            <person name="Overmann J."/>
            <person name="Schuster S.C."/>
            <person name="Bryant D.A."/>
            <person name="Richardson P."/>
        </authorList>
    </citation>
    <scope>NUCLEOTIDE SEQUENCE [LARGE SCALE GENOMIC DNA]</scope>
    <source>
        <strain>DSM 265 / 1930</strain>
    </source>
</reference>
<feature type="chain" id="PRO_1000087325" description="Protein translocase subunit SecA">
    <location>
        <begin position="1"/>
        <end position="1020"/>
    </location>
</feature>
<feature type="region of interest" description="Disordered" evidence="2">
    <location>
        <begin position="974"/>
        <end position="1020"/>
    </location>
</feature>
<feature type="binding site" evidence="1">
    <location>
        <position position="143"/>
    </location>
    <ligand>
        <name>ATP</name>
        <dbReference type="ChEBI" id="CHEBI:30616"/>
    </ligand>
</feature>
<feature type="binding site" evidence="1">
    <location>
        <begin position="161"/>
        <end position="165"/>
    </location>
    <ligand>
        <name>ATP</name>
        <dbReference type="ChEBI" id="CHEBI:30616"/>
    </ligand>
</feature>
<feature type="binding site" evidence="1">
    <location>
        <position position="661"/>
    </location>
    <ligand>
        <name>ATP</name>
        <dbReference type="ChEBI" id="CHEBI:30616"/>
    </ligand>
</feature>
<feature type="binding site" evidence="1">
    <location>
        <position position="1004"/>
    </location>
    <ligand>
        <name>Zn(2+)</name>
        <dbReference type="ChEBI" id="CHEBI:29105"/>
    </ligand>
</feature>
<feature type="binding site" evidence="1">
    <location>
        <position position="1006"/>
    </location>
    <ligand>
        <name>Zn(2+)</name>
        <dbReference type="ChEBI" id="CHEBI:29105"/>
    </ligand>
</feature>
<feature type="binding site" evidence="1">
    <location>
        <position position="1015"/>
    </location>
    <ligand>
        <name>Zn(2+)</name>
        <dbReference type="ChEBI" id="CHEBI:29105"/>
    </ligand>
</feature>
<feature type="binding site" evidence="1">
    <location>
        <position position="1016"/>
    </location>
    <ligand>
        <name>Zn(2+)</name>
        <dbReference type="ChEBI" id="CHEBI:29105"/>
    </ligand>
</feature>
<accession>A4SEF9</accession>
<comment type="function">
    <text evidence="1">Part of the Sec protein translocase complex. Interacts with the SecYEG preprotein conducting channel. Has a central role in coupling the hydrolysis of ATP to the transfer of proteins into and across the cell membrane, serving as an ATP-driven molecular motor driving the stepwise translocation of polypeptide chains across the membrane.</text>
</comment>
<comment type="catalytic activity">
    <reaction evidence="1">
        <text>ATP + H2O + cellular proteinSide 1 = ADP + phosphate + cellular proteinSide 2.</text>
        <dbReference type="EC" id="7.4.2.8"/>
    </reaction>
</comment>
<comment type="cofactor">
    <cofactor evidence="1">
        <name>Zn(2+)</name>
        <dbReference type="ChEBI" id="CHEBI:29105"/>
    </cofactor>
    <text evidence="1">May bind 1 zinc ion per subunit.</text>
</comment>
<comment type="subunit">
    <text evidence="1">Monomer and homodimer. Part of the essential Sec protein translocation apparatus which comprises SecA, SecYEG and auxiliary proteins SecDF. Other proteins may also be involved.</text>
</comment>
<comment type="subcellular location">
    <subcellularLocation>
        <location evidence="1">Cell inner membrane</location>
        <topology evidence="1">Peripheral membrane protein</topology>
        <orientation evidence="1">Cytoplasmic side</orientation>
    </subcellularLocation>
    <subcellularLocation>
        <location evidence="1">Cytoplasm</location>
    </subcellularLocation>
    <text evidence="1">Distribution is 50-50.</text>
</comment>
<comment type="similarity">
    <text evidence="1">Belongs to the SecA family.</text>
</comment>
<dbReference type="EC" id="7.4.2.8" evidence="1"/>
<dbReference type="EMBL" id="CP000607">
    <property type="protein sequence ID" value="ABP36868.1"/>
    <property type="molecule type" value="Genomic_DNA"/>
</dbReference>
<dbReference type="SMR" id="A4SEF9"/>
<dbReference type="STRING" id="290318.Cvib_0853"/>
<dbReference type="KEGG" id="pvi:Cvib_0853"/>
<dbReference type="eggNOG" id="COG0653">
    <property type="taxonomic scope" value="Bacteria"/>
</dbReference>
<dbReference type="HOGENOM" id="CLU_005314_3_0_10"/>
<dbReference type="OrthoDB" id="9805579at2"/>
<dbReference type="GO" id="GO:0031522">
    <property type="term" value="C:cell envelope Sec protein transport complex"/>
    <property type="evidence" value="ECO:0007669"/>
    <property type="project" value="TreeGrafter"/>
</dbReference>
<dbReference type="GO" id="GO:0005829">
    <property type="term" value="C:cytosol"/>
    <property type="evidence" value="ECO:0007669"/>
    <property type="project" value="TreeGrafter"/>
</dbReference>
<dbReference type="GO" id="GO:0005886">
    <property type="term" value="C:plasma membrane"/>
    <property type="evidence" value="ECO:0007669"/>
    <property type="project" value="UniProtKB-SubCell"/>
</dbReference>
<dbReference type="GO" id="GO:0005524">
    <property type="term" value="F:ATP binding"/>
    <property type="evidence" value="ECO:0007669"/>
    <property type="project" value="UniProtKB-UniRule"/>
</dbReference>
<dbReference type="GO" id="GO:0046872">
    <property type="term" value="F:metal ion binding"/>
    <property type="evidence" value="ECO:0007669"/>
    <property type="project" value="UniProtKB-KW"/>
</dbReference>
<dbReference type="GO" id="GO:0008564">
    <property type="term" value="F:protein-exporting ATPase activity"/>
    <property type="evidence" value="ECO:0007669"/>
    <property type="project" value="UniProtKB-EC"/>
</dbReference>
<dbReference type="GO" id="GO:0065002">
    <property type="term" value="P:intracellular protein transmembrane transport"/>
    <property type="evidence" value="ECO:0007669"/>
    <property type="project" value="UniProtKB-UniRule"/>
</dbReference>
<dbReference type="GO" id="GO:0017038">
    <property type="term" value="P:protein import"/>
    <property type="evidence" value="ECO:0007669"/>
    <property type="project" value="InterPro"/>
</dbReference>
<dbReference type="GO" id="GO:0006605">
    <property type="term" value="P:protein targeting"/>
    <property type="evidence" value="ECO:0007669"/>
    <property type="project" value="UniProtKB-UniRule"/>
</dbReference>
<dbReference type="GO" id="GO:0043952">
    <property type="term" value="P:protein transport by the Sec complex"/>
    <property type="evidence" value="ECO:0007669"/>
    <property type="project" value="TreeGrafter"/>
</dbReference>
<dbReference type="CDD" id="cd17928">
    <property type="entry name" value="DEXDc_SecA"/>
    <property type="match status" value="1"/>
</dbReference>
<dbReference type="CDD" id="cd18803">
    <property type="entry name" value="SF2_C_secA"/>
    <property type="match status" value="1"/>
</dbReference>
<dbReference type="FunFam" id="3.40.50.300:FF:000246">
    <property type="entry name" value="Preprotein translocase subunit SecA"/>
    <property type="match status" value="1"/>
</dbReference>
<dbReference type="FunFam" id="3.40.50.300:FF:000429">
    <property type="entry name" value="Preprotein translocase subunit SecA"/>
    <property type="match status" value="1"/>
</dbReference>
<dbReference type="Gene3D" id="1.10.3060.10">
    <property type="entry name" value="Helical scaffold and wing domains of SecA"/>
    <property type="match status" value="1"/>
</dbReference>
<dbReference type="Gene3D" id="3.40.50.300">
    <property type="entry name" value="P-loop containing nucleotide triphosphate hydrolases"/>
    <property type="match status" value="3"/>
</dbReference>
<dbReference type="Gene3D" id="3.90.1440.10">
    <property type="entry name" value="SecA, preprotein cross-linking domain"/>
    <property type="match status" value="1"/>
</dbReference>
<dbReference type="HAMAP" id="MF_01382">
    <property type="entry name" value="SecA"/>
    <property type="match status" value="1"/>
</dbReference>
<dbReference type="InterPro" id="IPR014001">
    <property type="entry name" value="Helicase_ATP-bd"/>
</dbReference>
<dbReference type="InterPro" id="IPR001650">
    <property type="entry name" value="Helicase_C-like"/>
</dbReference>
<dbReference type="InterPro" id="IPR027417">
    <property type="entry name" value="P-loop_NTPase"/>
</dbReference>
<dbReference type="InterPro" id="IPR004027">
    <property type="entry name" value="SEC_C_motif"/>
</dbReference>
<dbReference type="InterPro" id="IPR000185">
    <property type="entry name" value="SecA"/>
</dbReference>
<dbReference type="InterPro" id="IPR020937">
    <property type="entry name" value="SecA_CS"/>
</dbReference>
<dbReference type="InterPro" id="IPR011115">
    <property type="entry name" value="SecA_DEAD"/>
</dbReference>
<dbReference type="InterPro" id="IPR014018">
    <property type="entry name" value="SecA_motor_DEAD"/>
</dbReference>
<dbReference type="InterPro" id="IPR011130">
    <property type="entry name" value="SecA_preprotein_X-link_dom"/>
</dbReference>
<dbReference type="InterPro" id="IPR044722">
    <property type="entry name" value="SecA_SF2_C"/>
</dbReference>
<dbReference type="InterPro" id="IPR011116">
    <property type="entry name" value="SecA_Wing/Scaffold"/>
</dbReference>
<dbReference type="InterPro" id="IPR036266">
    <property type="entry name" value="SecA_Wing/Scaffold_sf"/>
</dbReference>
<dbReference type="InterPro" id="IPR036670">
    <property type="entry name" value="SecA_X-link_sf"/>
</dbReference>
<dbReference type="NCBIfam" id="TIGR00963">
    <property type="entry name" value="secA"/>
    <property type="match status" value="1"/>
</dbReference>
<dbReference type="PANTHER" id="PTHR30612:SF0">
    <property type="entry name" value="CHLOROPLAST PROTEIN-TRANSPORTING ATPASE"/>
    <property type="match status" value="1"/>
</dbReference>
<dbReference type="PANTHER" id="PTHR30612">
    <property type="entry name" value="SECA INNER MEMBRANE COMPONENT OF SEC PROTEIN SECRETION SYSTEM"/>
    <property type="match status" value="1"/>
</dbReference>
<dbReference type="Pfam" id="PF21090">
    <property type="entry name" value="P-loop_SecA"/>
    <property type="match status" value="2"/>
</dbReference>
<dbReference type="Pfam" id="PF02810">
    <property type="entry name" value="SEC-C"/>
    <property type="match status" value="1"/>
</dbReference>
<dbReference type="Pfam" id="PF07517">
    <property type="entry name" value="SecA_DEAD"/>
    <property type="match status" value="1"/>
</dbReference>
<dbReference type="Pfam" id="PF01043">
    <property type="entry name" value="SecA_PP_bind"/>
    <property type="match status" value="1"/>
</dbReference>
<dbReference type="Pfam" id="PF07516">
    <property type="entry name" value="SecA_SW"/>
    <property type="match status" value="1"/>
</dbReference>
<dbReference type="PRINTS" id="PR00906">
    <property type="entry name" value="SECA"/>
</dbReference>
<dbReference type="SMART" id="SM00957">
    <property type="entry name" value="SecA_DEAD"/>
    <property type="match status" value="1"/>
</dbReference>
<dbReference type="SMART" id="SM00958">
    <property type="entry name" value="SecA_PP_bind"/>
    <property type="match status" value="1"/>
</dbReference>
<dbReference type="SUPFAM" id="SSF81886">
    <property type="entry name" value="Helical scaffold and wing domains of SecA"/>
    <property type="match status" value="1"/>
</dbReference>
<dbReference type="SUPFAM" id="SSF52540">
    <property type="entry name" value="P-loop containing nucleoside triphosphate hydrolases"/>
    <property type="match status" value="2"/>
</dbReference>
<dbReference type="SUPFAM" id="SSF81767">
    <property type="entry name" value="Pre-protein crosslinking domain of SecA"/>
    <property type="match status" value="1"/>
</dbReference>
<dbReference type="PROSITE" id="PS01312">
    <property type="entry name" value="SECA"/>
    <property type="match status" value="1"/>
</dbReference>
<dbReference type="PROSITE" id="PS51196">
    <property type="entry name" value="SECA_MOTOR_DEAD"/>
    <property type="match status" value="1"/>
</dbReference>
<gene>
    <name evidence="1" type="primary">secA</name>
    <name type="ordered locus">Cvib_0853</name>
</gene>
<organism>
    <name type="scientific">Chlorobium phaeovibrioides (strain DSM 265 / 1930)</name>
    <name type="common">Prosthecochloris vibrioformis (strain DSM 265)</name>
    <dbReference type="NCBI Taxonomy" id="290318"/>
    <lineage>
        <taxon>Bacteria</taxon>
        <taxon>Pseudomonadati</taxon>
        <taxon>Chlorobiota</taxon>
        <taxon>Chlorobiia</taxon>
        <taxon>Chlorobiales</taxon>
        <taxon>Chlorobiaceae</taxon>
        <taxon>Chlorobium/Pelodictyon group</taxon>
        <taxon>Chlorobium</taxon>
    </lineage>
</organism>